<gene>
    <name type="ordered locus">AF_0108</name>
</gene>
<proteinExistence type="inferred from homology"/>
<evidence type="ECO:0000255" key="1">
    <source>
        <dbReference type="HAMAP-Rule" id="MF_00960"/>
    </source>
</evidence>
<organism>
    <name type="scientific">Archaeoglobus fulgidus (strain ATCC 49558 / DSM 4304 / JCM 9628 / NBRC 100126 / VC-16)</name>
    <dbReference type="NCBI Taxonomy" id="224325"/>
    <lineage>
        <taxon>Archaea</taxon>
        <taxon>Methanobacteriati</taxon>
        <taxon>Methanobacteriota</taxon>
        <taxon>Archaeoglobi</taxon>
        <taxon>Archaeoglobales</taxon>
        <taxon>Archaeoglobaceae</taxon>
        <taxon>Archaeoglobus</taxon>
    </lineage>
</organism>
<accession>O30128</accession>
<keyword id="KW-0028">Amino-acid biosynthesis</keyword>
<keyword id="KW-0057">Aromatic amino acid biosynthesis</keyword>
<keyword id="KW-1185">Reference proteome</keyword>
<keyword id="KW-0704">Schiff base</keyword>
<keyword id="KW-0808">Transferase</keyword>
<feature type="chain" id="PRO_0000138953" description="Putative 2-amino-3,7-dideoxy-D-threo-hept-6-ulosonate synthase 2">
    <location>
        <begin position="1"/>
        <end position="265"/>
    </location>
</feature>
<feature type="active site" description="Proton acceptor" evidence="1">
    <location>
        <position position="27"/>
    </location>
</feature>
<feature type="active site" description="Proton donor" evidence="1">
    <location>
        <position position="147"/>
    </location>
</feature>
<feature type="active site" description="Schiff-base intermediate with substrate" evidence="1">
    <location>
        <position position="177"/>
    </location>
</feature>
<feature type="binding site" evidence="1">
    <location>
        <begin position="27"/>
        <end position="31"/>
    </location>
    <ligand>
        <name>1-deoxy-D-threo-hexo-2,5-diulose 6-phosphate</name>
        <dbReference type="ChEBI" id="CHEBI:58861"/>
    </ligand>
</feature>
<feature type="binding site" evidence="1">
    <location>
        <begin position="147"/>
        <end position="149"/>
    </location>
    <ligand>
        <name>1-deoxy-D-threo-hexo-2,5-diulose 6-phosphate</name>
        <dbReference type="ChEBI" id="CHEBI:58861"/>
    </ligand>
</feature>
<feature type="binding site" evidence="1">
    <location>
        <begin position="202"/>
        <end position="203"/>
    </location>
    <ligand>
        <name>1-deoxy-D-threo-hexo-2,5-diulose 6-phosphate</name>
        <dbReference type="ChEBI" id="CHEBI:58861"/>
    </ligand>
</feature>
<feature type="binding site" evidence="1">
    <location>
        <begin position="230"/>
        <end position="231"/>
    </location>
    <ligand>
        <name>1-deoxy-D-threo-hexo-2,5-diulose 6-phosphate</name>
        <dbReference type="ChEBI" id="CHEBI:58861"/>
    </ligand>
</feature>
<reference key="1">
    <citation type="journal article" date="1997" name="Nature">
        <title>The complete genome sequence of the hyperthermophilic, sulphate-reducing archaeon Archaeoglobus fulgidus.</title>
        <authorList>
            <person name="Klenk H.-P."/>
            <person name="Clayton R.A."/>
            <person name="Tomb J.-F."/>
            <person name="White O."/>
            <person name="Nelson K.E."/>
            <person name="Ketchum K.A."/>
            <person name="Dodson R.J."/>
            <person name="Gwinn M.L."/>
            <person name="Hickey E.K."/>
            <person name="Peterson J.D."/>
            <person name="Richardson D.L."/>
            <person name="Kerlavage A.R."/>
            <person name="Graham D.E."/>
            <person name="Kyrpides N.C."/>
            <person name="Fleischmann R.D."/>
            <person name="Quackenbush J."/>
            <person name="Lee N.H."/>
            <person name="Sutton G.G."/>
            <person name="Gill S.R."/>
            <person name="Kirkness E.F."/>
            <person name="Dougherty B.A."/>
            <person name="McKenney K."/>
            <person name="Adams M.D."/>
            <person name="Loftus B.J."/>
            <person name="Peterson S.N."/>
            <person name="Reich C.I."/>
            <person name="McNeil L.K."/>
            <person name="Badger J.H."/>
            <person name="Glodek A."/>
            <person name="Zhou L."/>
            <person name="Overbeek R."/>
            <person name="Gocayne J.D."/>
            <person name="Weidman J.F."/>
            <person name="McDonald L.A."/>
            <person name="Utterback T.R."/>
            <person name="Cotton M.D."/>
            <person name="Spriggs T."/>
            <person name="Artiach P."/>
            <person name="Kaine B.P."/>
            <person name="Sykes S.M."/>
            <person name="Sadow P.W."/>
            <person name="D'Andrea K.P."/>
            <person name="Bowman C."/>
            <person name="Fujii C."/>
            <person name="Garland S.A."/>
            <person name="Mason T.M."/>
            <person name="Olsen G.J."/>
            <person name="Fraser C.M."/>
            <person name="Smith H.O."/>
            <person name="Woese C.R."/>
            <person name="Venter J.C."/>
        </authorList>
    </citation>
    <scope>NUCLEOTIDE SEQUENCE [LARGE SCALE GENOMIC DNA]</scope>
    <source>
        <strain>ATCC 49558 / DSM 4304 / JCM 9628 / NBRC 100126 / VC-16</strain>
    </source>
</reference>
<dbReference type="EC" id="2.2.1.10" evidence="1"/>
<dbReference type="EMBL" id="AE000782">
    <property type="protein sequence ID" value="AAB91123.1"/>
    <property type="molecule type" value="Genomic_DNA"/>
</dbReference>
<dbReference type="PIR" id="D69263">
    <property type="entry name" value="D69263"/>
</dbReference>
<dbReference type="RefSeq" id="WP_010877622.1">
    <property type="nucleotide sequence ID" value="NC_000917.1"/>
</dbReference>
<dbReference type="SMR" id="O30128"/>
<dbReference type="STRING" id="224325.AF_0108"/>
<dbReference type="PaxDb" id="224325-AF_0108"/>
<dbReference type="EnsemblBacteria" id="AAB91123">
    <property type="protein sequence ID" value="AAB91123"/>
    <property type="gene ID" value="AF_0108"/>
</dbReference>
<dbReference type="GeneID" id="1483320"/>
<dbReference type="KEGG" id="afu:AF_0108"/>
<dbReference type="eggNOG" id="arCOG04044">
    <property type="taxonomic scope" value="Archaea"/>
</dbReference>
<dbReference type="HOGENOM" id="CLU_057069_2_0_2"/>
<dbReference type="OrthoDB" id="50091at2157"/>
<dbReference type="PhylomeDB" id="O30128"/>
<dbReference type="Proteomes" id="UP000002199">
    <property type="component" value="Chromosome"/>
</dbReference>
<dbReference type="GO" id="GO:0004332">
    <property type="term" value="F:fructose-bisphosphate aldolase activity"/>
    <property type="evidence" value="ECO:0007669"/>
    <property type="project" value="InterPro"/>
</dbReference>
<dbReference type="GO" id="GO:0016836">
    <property type="term" value="F:hydro-lyase activity"/>
    <property type="evidence" value="ECO:0007669"/>
    <property type="project" value="InterPro"/>
</dbReference>
<dbReference type="GO" id="GO:0016744">
    <property type="term" value="F:transketolase or transaldolase activity"/>
    <property type="evidence" value="ECO:0007669"/>
    <property type="project" value="UniProtKB-UniRule"/>
</dbReference>
<dbReference type="GO" id="GO:0008652">
    <property type="term" value="P:amino acid biosynthetic process"/>
    <property type="evidence" value="ECO:0007669"/>
    <property type="project" value="UniProtKB-KW"/>
</dbReference>
<dbReference type="GO" id="GO:0009073">
    <property type="term" value="P:aromatic amino acid family biosynthetic process"/>
    <property type="evidence" value="ECO:0007669"/>
    <property type="project" value="UniProtKB-UniRule"/>
</dbReference>
<dbReference type="CDD" id="cd00958">
    <property type="entry name" value="DhnA"/>
    <property type="match status" value="1"/>
</dbReference>
<dbReference type="Gene3D" id="3.20.20.70">
    <property type="entry name" value="Aldolase class I"/>
    <property type="match status" value="1"/>
</dbReference>
<dbReference type="HAMAP" id="MF_00960">
    <property type="entry name" value="ADH_synthase"/>
    <property type="match status" value="1"/>
</dbReference>
<dbReference type="InterPro" id="IPR010210">
    <property type="entry name" value="ADH_synthase"/>
</dbReference>
<dbReference type="InterPro" id="IPR013785">
    <property type="entry name" value="Aldolase_TIM"/>
</dbReference>
<dbReference type="InterPro" id="IPR002915">
    <property type="entry name" value="DeoC/FbaB/LacD_aldolase"/>
</dbReference>
<dbReference type="InterPro" id="IPR050456">
    <property type="entry name" value="DeoC/FbaB_aldolase"/>
</dbReference>
<dbReference type="InterPro" id="IPR041720">
    <property type="entry name" value="FbaB-like"/>
</dbReference>
<dbReference type="NCBIfam" id="TIGR01949">
    <property type="entry name" value="ADH_synth"/>
    <property type="match status" value="1"/>
</dbReference>
<dbReference type="NCBIfam" id="NF005556">
    <property type="entry name" value="PRK07226.1"/>
    <property type="match status" value="1"/>
</dbReference>
<dbReference type="PANTHER" id="PTHR47916:SF1">
    <property type="entry name" value="3-HYDROXY-5-PHOSPHONOOXYPENTANE-2,4-DIONE THIOLASE"/>
    <property type="match status" value="1"/>
</dbReference>
<dbReference type="PANTHER" id="PTHR47916">
    <property type="entry name" value="FRUCTOSE-BISPHOSPHATE ALDOLASE CLASS 1"/>
    <property type="match status" value="1"/>
</dbReference>
<dbReference type="Pfam" id="PF01791">
    <property type="entry name" value="DeoC"/>
    <property type="match status" value="1"/>
</dbReference>
<dbReference type="PIRSF" id="PIRSF038992">
    <property type="entry name" value="Aldolase_Ia"/>
    <property type="match status" value="1"/>
</dbReference>
<dbReference type="SMART" id="SM01133">
    <property type="entry name" value="DeoC"/>
    <property type="match status" value="1"/>
</dbReference>
<dbReference type="SUPFAM" id="SSF51569">
    <property type="entry name" value="Aldolase"/>
    <property type="match status" value="1"/>
</dbReference>
<comment type="function">
    <text evidence="1">Catalyzes a transaldol reaction between 6-deoxy-5-ketofructose 1-phosphate (DKFP) and L-aspartate semialdehyde (ASA) with an elimination of hydroxypyruvaldehyde phosphate to yield 2-amino-3,7-dideoxy-D-threo-hept-6-ulosonate (ADH). Plays a key role in an alternative pathway of the biosynthesis of 3-dehydroquinate (DHQ), which is involved in the canonical pathway for the biosynthesis of aromatic amino acids.</text>
</comment>
<comment type="catalytic activity">
    <reaction evidence="1">
        <text>1-deoxy-D-threo-hexo-2,5-diulose 6-phosphate + L-aspartate 4-semialdehyde = 2,3-dioxopropyl phosphate + 2-amino-2,3,7-trideoxy-D-lyxo-hept-6-ulosonate</text>
        <dbReference type="Rhea" id="RHEA:25952"/>
        <dbReference type="ChEBI" id="CHEBI:58859"/>
        <dbReference type="ChEBI" id="CHEBI:58860"/>
        <dbReference type="ChEBI" id="CHEBI:58861"/>
        <dbReference type="ChEBI" id="CHEBI:537519"/>
        <dbReference type="EC" id="2.2.1.10"/>
    </reaction>
</comment>
<comment type="subunit">
    <text evidence="1">Homodecamer.</text>
</comment>
<comment type="similarity">
    <text evidence="1">Belongs to the DeoC/FbaB aldolase family. ADHS subfamily.</text>
</comment>
<protein>
    <recommendedName>
        <fullName>Putative 2-amino-3,7-dideoxy-D-threo-hept-6-ulosonate synthase 2</fullName>
        <shortName evidence="1">ADH synthase 2</shortName>
        <shortName evidence="1">ADHS 2</shortName>
        <shortName evidence="1">ADTH synthase 2</shortName>
        <ecNumber evidence="1">2.2.1.10</ecNumber>
    </recommendedName>
</protein>
<sequence length="265" mass="28168">MTKIGKKIRIERIINRESRNTVIVPMDHGVSMGPIEGLKNLAETVNAVAEGGANAVVLHKGVVGFGHRGYGKDVGLIIHLSASTSLAPDPNEKVLVCTVEEAIKLGADAVSVHVNVGSKTEAYQLRKLGEISKIAGEWGMPLLAMMYPRGDGINQFDEKAVALAARVGAELGADIIKTNFTGDVESFRRVVDGCPVPVVVAGGPKMGSDEDILRMVRMAMDAGARGVAIGRNIFQANNPTKMTRAISMIVHDNADVSEALEFLKS</sequence>
<name>ADHS2_ARCFU</name>